<dbReference type="EC" id="7.1.1.-" evidence="1"/>
<dbReference type="EMBL" id="AJ970307">
    <property type="protein sequence ID" value="CAJ00761.1"/>
    <property type="molecule type" value="Genomic_DNA"/>
</dbReference>
<dbReference type="EMBL" id="DQ119058">
    <property type="protein sequence ID" value="AAZ94654.1"/>
    <property type="molecule type" value="Genomic_DNA"/>
</dbReference>
<dbReference type="EMBL" id="DQ865975">
    <property type="protein sequence ID" value="ABI97420.1"/>
    <property type="molecule type" value="Genomic_DNA"/>
</dbReference>
<dbReference type="EMBL" id="DQ865976">
    <property type="protein sequence ID" value="ABI98749.1"/>
    <property type="molecule type" value="Genomic_DNA"/>
</dbReference>
<dbReference type="RefSeq" id="YP_247602.1">
    <property type="nucleotide sequence ID" value="NC_007144.1"/>
</dbReference>
<dbReference type="SMR" id="Q4VZH2"/>
<dbReference type="GeneID" id="3429262"/>
<dbReference type="KEGG" id="csv:3429262"/>
<dbReference type="eggNOG" id="KOG1713">
    <property type="taxonomic scope" value="Eukaryota"/>
</dbReference>
<dbReference type="OrthoDB" id="1909959at2759"/>
<dbReference type="GO" id="GO:0009535">
    <property type="term" value="C:chloroplast thylakoid membrane"/>
    <property type="evidence" value="ECO:0007669"/>
    <property type="project" value="UniProtKB-SubCell"/>
</dbReference>
<dbReference type="GO" id="GO:0008137">
    <property type="term" value="F:NADH dehydrogenase (ubiquinone) activity"/>
    <property type="evidence" value="ECO:0007669"/>
    <property type="project" value="InterPro"/>
</dbReference>
<dbReference type="GO" id="GO:0048038">
    <property type="term" value="F:quinone binding"/>
    <property type="evidence" value="ECO:0007669"/>
    <property type="project" value="UniProtKB-KW"/>
</dbReference>
<dbReference type="GO" id="GO:0019684">
    <property type="term" value="P:photosynthesis, light reaction"/>
    <property type="evidence" value="ECO:0007669"/>
    <property type="project" value="UniProtKB-UniRule"/>
</dbReference>
<dbReference type="FunFam" id="3.30.460.80:FF:000004">
    <property type="entry name" value="NAD(P)H-quinone oxidoreductase subunit J, chloroplastic"/>
    <property type="match status" value="1"/>
</dbReference>
<dbReference type="Gene3D" id="3.30.460.80">
    <property type="entry name" value="NADH:ubiquinone oxidoreductase, 30kDa subunit"/>
    <property type="match status" value="1"/>
</dbReference>
<dbReference type="HAMAP" id="MF_01357">
    <property type="entry name" value="NDH1_NuoC"/>
    <property type="match status" value="1"/>
</dbReference>
<dbReference type="InterPro" id="IPR010218">
    <property type="entry name" value="NADH_DH_suC"/>
</dbReference>
<dbReference type="InterPro" id="IPR037232">
    <property type="entry name" value="NADH_quin_OxRdtase_su_C/D-like"/>
</dbReference>
<dbReference type="InterPro" id="IPR001268">
    <property type="entry name" value="NADH_UbQ_OxRdtase_30kDa_su"/>
</dbReference>
<dbReference type="InterPro" id="IPR020396">
    <property type="entry name" value="NADH_UbQ_OxRdtase_CS"/>
</dbReference>
<dbReference type="NCBIfam" id="NF009141">
    <property type="entry name" value="PRK12494.1"/>
    <property type="match status" value="1"/>
</dbReference>
<dbReference type="PANTHER" id="PTHR10884:SF14">
    <property type="entry name" value="NADH DEHYDROGENASE [UBIQUINONE] IRON-SULFUR PROTEIN 3, MITOCHONDRIAL"/>
    <property type="match status" value="1"/>
</dbReference>
<dbReference type="PANTHER" id="PTHR10884">
    <property type="entry name" value="NADH DEHYDROGENASE UBIQUINONE IRON-SULFUR PROTEIN 3"/>
    <property type="match status" value="1"/>
</dbReference>
<dbReference type="Pfam" id="PF00329">
    <property type="entry name" value="Complex1_30kDa"/>
    <property type="match status" value="1"/>
</dbReference>
<dbReference type="SUPFAM" id="SSF143243">
    <property type="entry name" value="Nqo5-like"/>
    <property type="match status" value="1"/>
</dbReference>
<dbReference type="PROSITE" id="PS00542">
    <property type="entry name" value="COMPLEX1_30K"/>
    <property type="match status" value="1"/>
</dbReference>
<evidence type="ECO:0000255" key="1">
    <source>
        <dbReference type="HAMAP-Rule" id="MF_01357"/>
    </source>
</evidence>
<accession>Q4VZH2</accession>
<geneLocation type="chloroplast"/>
<organism>
    <name type="scientific">Cucumis sativus</name>
    <name type="common">Cucumber</name>
    <dbReference type="NCBI Taxonomy" id="3659"/>
    <lineage>
        <taxon>Eukaryota</taxon>
        <taxon>Viridiplantae</taxon>
        <taxon>Streptophyta</taxon>
        <taxon>Embryophyta</taxon>
        <taxon>Tracheophyta</taxon>
        <taxon>Spermatophyta</taxon>
        <taxon>Magnoliopsida</taxon>
        <taxon>eudicotyledons</taxon>
        <taxon>Gunneridae</taxon>
        <taxon>Pentapetalae</taxon>
        <taxon>rosids</taxon>
        <taxon>fabids</taxon>
        <taxon>Cucurbitales</taxon>
        <taxon>Cucurbitaceae</taxon>
        <taxon>Benincaseae</taxon>
        <taxon>Cucumis</taxon>
    </lineage>
</organism>
<comment type="function">
    <text evidence="1">NDH shuttles electrons from NAD(P)H:plastoquinone, via FMN and iron-sulfur (Fe-S) centers, to quinones in the photosynthetic chain and possibly in a chloroplast respiratory chain. The immediate electron acceptor for the enzyme in this species is believed to be plastoquinone. Couples the redox reaction to proton translocation, and thus conserves the redox energy in a proton gradient.</text>
</comment>
<comment type="catalytic activity">
    <reaction evidence="1">
        <text>a plastoquinone + NADH + (n+1) H(+)(in) = a plastoquinol + NAD(+) + n H(+)(out)</text>
        <dbReference type="Rhea" id="RHEA:42608"/>
        <dbReference type="Rhea" id="RHEA-COMP:9561"/>
        <dbReference type="Rhea" id="RHEA-COMP:9562"/>
        <dbReference type="ChEBI" id="CHEBI:15378"/>
        <dbReference type="ChEBI" id="CHEBI:17757"/>
        <dbReference type="ChEBI" id="CHEBI:57540"/>
        <dbReference type="ChEBI" id="CHEBI:57945"/>
        <dbReference type="ChEBI" id="CHEBI:62192"/>
    </reaction>
</comment>
<comment type="catalytic activity">
    <reaction evidence="1">
        <text>a plastoquinone + NADPH + (n+1) H(+)(in) = a plastoquinol + NADP(+) + n H(+)(out)</text>
        <dbReference type="Rhea" id="RHEA:42612"/>
        <dbReference type="Rhea" id="RHEA-COMP:9561"/>
        <dbReference type="Rhea" id="RHEA-COMP:9562"/>
        <dbReference type="ChEBI" id="CHEBI:15378"/>
        <dbReference type="ChEBI" id="CHEBI:17757"/>
        <dbReference type="ChEBI" id="CHEBI:57783"/>
        <dbReference type="ChEBI" id="CHEBI:58349"/>
        <dbReference type="ChEBI" id="CHEBI:62192"/>
    </reaction>
</comment>
<comment type="subunit">
    <text evidence="1">NDH is composed of at least 16 different subunits, 5 of which are encoded in the nucleus.</text>
</comment>
<comment type="subcellular location">
    <subcellularLocation>
        <location evidence="1">Plastid</location>
        <location evidence="1">Chloroplast thylakoid membrane</location>
        <topology evidence="1">Peripheral membrane protein</topology>
        <orientation evidence="1">Stromal side</orientation>
    </subcellularLocation>
</comment>
<comment type="similarity">
    <text evidence="1">Belongs to the complex I 30 kDa subunit family.</text>
</comment>
<proteinExistence type="inferred from homology"/>
<gene>
    <name evidence="1" type="primary">ndhJ</name>
    <name type="ordered locus">CsCp041</name>
</gene>
<feature type="chain" id="PRO_0000358259" description="NAD(P)H-quinone oxidoreductase subunit J, chloroplastic">
    <location>
        <begin position="1"/>
        <end position="158"/>
    </location>
</feature>
<name>NDHJ_CUCSA</name>
<sequence>MQGNLSSWLVKHGLVHRSLGFDYQGIETLQIKPEEWHSIAVILYVYGYNYLRSQCAYDVAPGGLLASVYHLTRIEYGIDQPEEVCIKVFAARINPRIPSVFWVWKSADFPERESYDMLGIYYDNHPRLKRILMPESWVGWPLRKDYIAPNFYEIQDAH</sequence>
<protein>
    <recommendedName>
        <fullName evidence="1">NAD(P)H-quinone oxidoreductase subunit J, chloroplastic</fullName>
        <ecNumber evidence="1">7.1.1.-</ecNumber>
    </recommendedName>
    <alternativeName>
        <fullName>NAD(P)H dehydrogenase subunit J</fullName>
    </alternativeName>
    <alternativeName>
        <fullName evidence="1">NADH-plastoquinone oxidoreductase subunit J</fullName>
    </alternativeName>
</protein>
<reference key="1">
    <citation type="journal article" date="2006" name="Plant Cell Rep.">
        <title>Complete sequence and organization of the cucumber (Cucumis sativus L. cv. Baekmibaekdadagi) chloroplast genome.</title>
        <authorList>
            <person name="Kim J.-S."/>
            <person name="Jung J.D."/>
            <person name="Lee J.-A."/>
            <person name="Park H.-W."/>
            <person name="Oh K.-H."/>
            <person name="Jeong W.J."/>
            <person name="Choi D.-W."/>
            <person name="Liu J.R."/>
            <person name="Cho K.Y."/>
        </authorList>
    </citation>
    <scope>NUCLEOTIDE SEQUENCE [LARGE SCALE GENOMIC DNA]</scope>
    <source>
        <strain>cv. Baekmibaekdadagi</strain>
    </source>
</reference>
<reference key="2">
    <citation type="journal article" date="2007" name="Cell. Mol. Biol. Lett.">
        <title>The complete structure of the cucumber (Cucumis sativus L.) chloroplast genome: its composition and comparative analysis.</title>
        <authorList>
            <person name="Plader W.W."/>
            <person name="Yukawa Y."/>
            <person name="Sugiura M."/>
            <person name="Malepszy S."/>
        </authorList>
    </citation>
    <scope>NUCLEOTIDE SEQUENCE [LARGE SCALE GENOMIC DNA]</scope>
    <source>
        <strain>cv. Borszczagowski</strain>
    </source>
</reference>
<reference key="3">
    <citation type="journal article" date="2007" name="Genome">
        <title>Sequencing cucumber (Cucumis sativus L.) chloroplast genomes identifies differences between chilling-tolerant and -susceptible cucumber lines.</title>
        <authorList>
            <person name="Chung S.-M."/>
            <person name="Gordon V.S."/>
            <person name="Staub J.E."/>
        </authorList>
    </citation>
    <scope>NUCLEOTIDE SEQUENCE [LARGE SCALE GENOMIC DNA]</scope>
    <source>
        <strain>cv. Chipper</strain>
        <strain>cv. Gy14</strain>
    </source>
</reference>
<keyword id="KW-0150">Chloroplast</keyword>
<keyword id="KW-0472">Membrane</keyword>
<keyword id="KW-0520">NAD</keyword>
<keyword id="KW-0521">NADP</keyword>
<keyword id="KW-0934">Plastid</keyword>
<keyword id="KW-0618">Plastoquinone</keyword>
<keyword id="KW-0874">Quinone</keyword>
<keyword id="KW-0793">Thylakoid</keyword>
<keyword id="KW-1278">Translocase</keyword>
<keyword id="KW-0813">Transport</keyword>